<keyword id="KW-0066">ATP synthesis</keyword>
<keyword id="KW-0997">Cell inner membrane</keyword>
<keyword id="KW-1003">Cell membrane</keyword>
<keyword id="KW-0139">CF(1)</keyword>
<keyword id="KW-0375">Hydrogen ion transport</keyword>
<keyword id="KW-0406">Ion transport</keyword>
<keyword id="KW-0472">Membrane</keyword>
<keyword id="KW-0813">Transport</keyword>
<dbReference type="EMBL" id="CU928162">
    <property type="protein sequence ID" value="CAR10543.2"/>
    <property type="molecule type" value="Genomic_DNA"/>
</dbReference>
<dbReference type="RefSeq" id="WP_000896498.1">
    <property type="nucleotide sequence ID" value="NC_011745.1"/>
</dbReference>
<dbReference type="SMR" id="B7N2H2"/>
<dbReference type="GeneID" id="93778234"/>
<dbReference type="KEGG" id="ecq:ECED1_4423"/>
<dbReference type="HOGENOM" id="CLU_050669_0_1_6"/>
<dbReference type="Proteomes" id="UP000000748">
    <property type="component" value="Chromosome"/>
</dbReference>
<dbReference type="GO" id="GO:0005886">
    <property type="term" value="C:plasma membrane"/>
    <property type="evidence" value="ECO:0007669"/>
    <property type="project" value="UniProtKB-SubCell"/>
</dbReference>
<dbReference type="GO" id="GO:0045259">
    <property type="term" value="C:proton-transporting ATP synthase complex"/>
    <property type="evidence" value="ECO:0007669"/>
    <property type="project" value="UniProtKB-KW"/>
</dbReference>
<dbReference type="GO" id="GO:0005524">
    <property type="term" value="F:ATP binding"/>
    <property type="evidence" value="ECO:0007669"/>
    <property type="project" value="UniProtKB-UniRule"/>
</dbReference>
<dbReference type="GO" id="GO:0046933">
    <property type="term" value="F:proton-transporting ATP synthase activity, rotational mechanism"/>
    <property type="evidence" value="ECO:0007669"/>
    <property type="project" value="UniProtKB-UniRule"/>
</dbReference>
<dbReference type="GO" id="GO:0042777">
    <property type="term" value="P:proton motive force-driven plasma membrane ATP synthesis"/>
    <property type="evidence" value="ECO:0007669"/>
    <property type="project" value="UniProtKB-UniRule"/>
</dbReference>
<dbReference type="CDD" id="cd12151">
    <property type="entry name" value="F1-ATPase_gamma"/>
    <property type="match status" value="1"/>
</dbReference>
<dbReference type="FunFam" id="1.10.287.80:FF:000005">
    <property type="entry name" value="ATP synthase gamma chain"/>
    <property type="match status" value="2"/>
</dbReference>
<dbReference type="FunFam" id="3.40.1380.10:FF:000001">
    <property type="entry name" value="ATP synthase gamma chain"/>
    <property type="match status" value="1"/>
</dbReference>
<dbReference type="Gene3D" id="3.40.1380.10">
    <property type="match status" value="1"/>
</dbReference>
<dbReference type="Gene3D" id="1.10.287.80">
    <property type="entry name" value="ATP synthase, gamma subunit, helix hairpin domain"/>
    <property type="match status" value="1"/>
</dbReference>
<dbReference type="HAMAP" id="MF_00815">
    <property type="entry name" value="ATP_synth_gamma_bact"/>
    <property type="match status" value="1"/>
</dbReference>
<dbReference type="InterPro" id="IPR035968">
    <property type="entry name" value="ATP_synth_F1_ATPase_gsu"/>
</dbReference>
<dbReference type="InterPro" id="IPR000131">
    <property type="entry name" value="ATP_synth_F1_gsu"/>
</dbReference>
<dbReference type="InterPro" id="IPR023632">
    <property type="entry name" value="ATP_synth_F1_gsu_CS"/>
</dbReference>
<dbReference type="NCBIfam" id="TIGR01146">
    <property type="entry name" value="ATPsyn_F1gamma"/>
    <property type="match status" value="1"/>
</dbReference>
<dbReference type="NCBIfam" id="NF004144">
    <property type="entry name" value="PRK05621.1-1"/>
    <property type="match status" value="1"/>
</dbReference>
<dbReference type="PANTHER" id="PTHR11693">
    <property type="entry name" value="ATP SYNTHASE GAMMA CHAIN"/>
    <property type="match status" value="1"/>
</dbReference>
<dbReference type="PANTHER" id="PTHR11693:SF22">
    <property type="entry name" value="ATP SYNTHASE SUBUNIT GAMMA, MITOCHONDRIAL"/>
    <property type="match status" value="1"/>
</dbReference>
<dbReference type="Pfam" id="PF00231">
    <property type="entry name" value="ATP-synt"/>
    <property type="match status" value="1"/>
</dbReference>
<dbReference type="PRINTS" id="PR00126">
    <property type="entry name" value="ATPASEGAMMA"/>
</dbReference>
<dbReference type="SUPFAM" id="SSF52943">
    <property type="entry name" value="ATP synthase (F1-ATPase), gamma subunit"/>
    <property type="match status" value="1"/>
</dbReference>
<dbReference type="PROSITE" id="PS00153">
    <property type="entry name" value="ATPASE_GAMMA"/>
    <property type="match status" value="1"/>
</dbReference>
<proteinExistence type="inferred from homology"/>
<reference key="1">
    <citation type="journal article" date="2009" name="PLoS Genet.">
        <title>Organised genome dynamics in the Escherichia coli species results in highly diverse adaptive paths.</title>
        <authorList>
            <person name="Touchon M."/>
            <person name="Hoede C."/>
            <person name="Tenaillon O."/>
            <person name="Barbe V."/>
            <person name="Baeriswyl S."/>
            <person name="Bidet P."/>
            <person name="Bingen E."/>
            <person name="Bonacorsi S."/>
            <person name="Bouchier C."/>
            <person name="Bouvet O."/>
            <person name="Calteau A."/>
            <person name="Chiapello H."/>
            <person name="Clermont O."/>
            <person name="Cruveiller S."/>
            <person name="Danchin A."/>
            <person name="Diard M."/>
            <person name="Dossat C."/>
            <person name="Karoui M.E."/>
            <person name="Frapy E."/>
            <person name="Garry L."/>
            <person name="Ghigo J.M."/>
            <person name="Gilles A.M."/>
            <person name="Johnson J."/>
            <person name="Le Bouguenec C."/>
            <person name="Lescat M."/>
            <person name="Mangenot S."/>
            <person name="Martinez-Jehanne V."/>
            <person name="Matic I."/>
            <person name="Nassif X."/>
            <person name="Oztas S."/>
            <person name="Petit M.A."/>
            <person name="Pichon C."/>
            <person name="Rouy Z."/>
            <person name="Ruf C.S."/>
            <person name="Schneider D."/>
            <person name="Tourret J."/>
            <person name="Vacherie B."/>
            <person name="Vallenet D."/>
            <person name="Medigue C."/>
            <person name="Rocha E.P.C."/>
            <person name="Denamur E."/>
        </authorList>
    </citation>
    <scope>NUCLEOTIDE SEQUENCE [LARGE SCALE GENOMIC DNA]</scope>
    <source>
        <strain>ED1a</strain>
    </source>
</reference>
<organism>
    <name type="scientific">Escherichia coli O81 (strain ED1a)</name>
    <dbReference type="NCBI Taxonomy" id="585397"/>
    <lineage>
        <taxon>Bacteria</taxon>
        <taxon>Pseudomonadati</taxon>
        <taxon>Pseudomonadota</taxon>
        <taxon>Gammaproteobacteria</taxon>
        <taxon>Enterobacterales</taxon>
        <taxon>Enterobacteriaceae</taxon>
        <taxon>Escherichia</taxon>
    </lineage>
</organism>
<gene>
    <name evidence="1" type="primary">atpG</name>
    <name type="ordered locus">ECED1_4423</name>
</gene>
<evidence type="ECO:0000255" key="1">
    <source>
        <dbReference type="HAMAP-Rule" id="MF_00815"/>
    </source>
</evidence>
<accession>B7N2H2</accession>
<name>ATPG_ECO81</name>
<sequence>MAGAKEIRSKIASVQNTQKITKAMEMVAASKMRKSQDRMAASRPYAETMRKVIGHLAHGNLEYKHPYLEDRDVKRVGYLVVSTDRGLCGGLNINLFKKLLAEMKTWTDKGVQCDLAMIGSKGVSFFNSVGGNVVAQVTGMGDNPSLSELIGPVKVMLQAYDEGRLDKLYIVSNKFINTMSQVPTISQLLPLPASDDDDLKHKSWDYLYEPDPKALLDTLLRRYVESQVYQGVVENLASEQAARMVAMKAATDNGGSLIKELQLVYNKARQASITQELTEIVSGAAAV</sequence>
<feature type="chain" id="PRO_1000148619" description="ATP synthase gamma chain">
    <location>
        <begin position="1"/>
        <end position="287"/>
    </location>
</feature>
<comment type="function">
    <text evidence="1">Produces ATP from ADP in the presence of a proton gradient across the membrane. The gamma chain is believed to be important in regulating ATPase activity and the flow of protons through the CF(0) complex.</text>
</comment>
<comment type="subunit">
    <text evidence="1">F-type ATPases have 2 components, CF(1) - the catalytic core - and CF(0) - the membrane proton channel. CF(1) has five subunits: alpha(3), beta(3), gamma(1), delta(1), epsilon(1). CF(0) has three main subunits: a, b and c.</text>
</comment>
<comment type="subcellular location">
    <subcellularLocation>
        <location evidence="1">Cell inner membrane</location>
        <topology evidence="1">Peripheral membrane protein</topology>
    </subcellularLocation>
</comment>
<comment type="similarity">
    <text evidence="1">Belongs to the ATPase gamma chain family.</text>
</comment>
<protein>
    <recommendedName>
        <fullName evidence="1">ATP synthase gamma chain</fullName>
    </recommendedName>
    <alternativeName>
        <fullName evidence="1">ATP synthase F1 sector gamma subunit</fullName>
    </alternativeName>
    <alternativeName>
        <fullName evidence="1">F-ATPase gamma subunit</fullName>
    </alternativeName>
</protein>